<comment type="subcellular location">
    <subcellularLocation>
        <location evidence="1">Cell membrane</location>
        <topology evidence="1">Multi-pass membrane protein</topology>
    </subcellularLocation>
</comment>
<comment type="similarity">
    <text evidence="1">Belongs to the UPF0114 family.</text>
</comment>
<organism>
    <name type="scientific">Salmonella enteritidis PT4 (strain P125109)</name>
    <dbReference type="NCBI Taxonomy" id="550537"/>
    <lineage>
        <taxon>Bacteria</taxon>
        <taxon>Pseudomonadati</taxon>
        <taxon>Pseudomonadota</taxon>
        <taxon>Gammaproteobacteria</taxon>
        <taxon>Enterobacterales</taxon>
        <taxon>Enterobacteriaceae</taxon>
        <taxon>Salmonella</taxon>
    </lineage>
</organism>
<evidence type="ECO:0000255" key="1">
    <source>
        <dbReference type="HAMAP-Rule" id="MF_00143"/>
    </source>
</evidence>
<dbReference type="EMBL" id="AM933172">
    <property type="protein sequence ID" value="CAR34572.1"/>
    <property type="molecule type" value="Genomic_DNA"/>
</dbReference>
<dbReference type="RefSeq" id="WP_000439335.1">
    <property type="nucleotide sequence ID" value="NC_011294.1"/>
</dbReference>
<dbReference type="KEGG" id="set:SEN2996"/>
<dbReference type="HOGENOM" id="CLU_097887_1_1_6"/>
<dbReference type="Proteomes" id="UP000000613">
    <property type="component" value="Chromosome"/>
</dbReference>
<dbReference type="GO" id="GO:0005886">
    <property type="term" value="C:plasma membrane"/>
    <property type="evidence" value="ECO:0007669"/>
    <property type="project" value="UniProtKB-SubCell"/>
</dbReference>
<dbReference type="HAMAP" id="MF_00143">
    <property type="entry name" value="UPF0114"/>
    <property type="match status" value="1"/>
</dbReference>
<dbReference type="InterPro" id="IPR005134">
    <property type="entry name" value="UPF0114"/>
</dbReference>
<dbReference type="InterPro" id="IPR020761">
    <property type="entry name" value="UPF0114_bac"/>
</dbReference>
<dbReference type="NCBIfam" id="TIGR00645">
    <property type="entry name" value="HI0507"/>
    <property type="match status" value="1"/>
</dbReference>
<dbReference type="PANTHER" id="PTHR38596">
    <property type="entry name" value="UPF0114 PROTEIN YQHA"/>
    <property type="match status" value="1"/>
</dbReference>
<dbReference type="PANTHER" id="PTHR38596:SF1">
    <property type="entry name" value="UPF0114 PROTEIN YQHA"/>
    <property type="match status" value="1"/>
</dbReference>
<dbReference type="Pfam" id="PF03350">
    <property type="entry name" value="UPF0114"/>
    <property type="match status" value="1"/>
</dbReference>
<accession>B5QYC8</accession>
<name>YQHA_SALEP</name>
<keyword id="KW-1003">Cell membrane</keyword>
<keyword id="KW-0472">Membrane</keyword>
<keyword id="KW-0812">Transmembrane</keyword>
<keyword id="KW-1133">Transmembrane helix</keyword>
<sequence>MERFLENVMYASRWLLAPVYFGLSLALIALALKFFQEILHVLPNVFALAEADLILVLLSLVDMTLVGGLLVMVMFSGYENFVSQLDISAGKEKLNWLGKMDATSLKNKVAASIVAISSIHLLRVFMDAKNVPDNKLMWYVIIHLTFVLSAFVMGYLDRLTRHNH</sequence>
<feature type="chain" id="PRO_1000096275" description="UPF0114 protein YqhA">
    <location>
        <begin position="1"/>
        <end position="164"/>
    </location>
</feature>
<feature type="transmembrane region" description="Helical" evidence="1">
    <location>
        <begin position="15"/>
        <end position="35"/>
    </location>
</feature>
<feature type="transmembrane region" description="Helical" evidence="1">
    <location>
        <begin position="53"/>
        <end position="73"/>
    </location>
</feature>
<feature type="transmembrane region" description="Helical" evidence="1">
    <location>
        <begin position="136"/>
        <end position="156"/>
    </location>
</feature>
<proteinExistence type="inferred from homology"/>
<gene>
    <name evidence="1" type="primary">yqhA</name>
    <name type="ordered locus">SEN2996</name>
</gene>
<protein>
    <recommendedName>
        <fullName evidence="1">UPF0114 protein YqhA</fullName>
    </recommendedName>
</protein>
<reference key="1">
    <citation type="journal article" date="2008" name="Genome Res.">
        <title>Comparative genome analysis of Salmonella enteritidis PT4 and Salmonella gallinarum 287/91 provides insights into evolutionary and host adaptation pathways.</title>
        <authorList>
            <person name="Thomson N.R."/>
            <person name="Clayton D.J."/>
            <person name="Windhorst D."/>
            <person name="Vernikos G."/>
            <person name="Davidson S."/>
            <person name="Churcher C."/>
            <person name="Quail M.A."/>
            <person name="Stevens M."/>
            <person name="Jones M.A."/>
            <person name="Watson M."/>
            <person name="Barron A."/>
            <person name="Layton A."/>
            <person name="Pickard D."/>
            <person name="Kingsley R.A."/>
            <person name="Bignell A."/>
            <person name="Clark L."/>
            <person name="Harris B."/>
            <person name="Ormond D."/>
            <person name="Abdellah Z."/>
            <person name="Brooks K."/>
            <person name="Cherevach I."/>
            <person name="Chillingworth T."/>
            <person name="Woodward J."/>
            <person name="Norberczak H."/>
            <person name="Lord A."/>
            <person name="Arrowsmith C."/>
            <person name="Jagels K."/>
            <person name="Moule S."/>
            <person name="Mungall K."/>
            <person name="Saunders M."/>
            <person name="Whitehead S."/>
            <person name="Chabalgoity J.A."/>
            <person name="Maskell D."/>
            <person name="Humphreys T."/>
            <person name="Roberts M."/>
            <person name="Barrow P.A."/>
            <person name="Dougan G."/>
            <person name="Parkhill J."/>
        </authorList>
    </citation>
    <scope>NUCLEOTIDE SEQUENCE [LARGE SCALE GENOMIC DNA]</scope>
    <source>
        <strain>P125109</strain>
    </source>
</reference>